<comment type="function">
    <text evidence="1">One of the primary rRNA binding proteins, it binds directly near the 3'-end of the 23S rRNA, where it nucleates assembly of the 50S subunit.</text>
</comment>
<comment type="subunit">
    <text evidence="1">Part of the 50S ribosomal subunit. Forms a cluster with proteins L14 and L19.</text>
</comment>
<comment type="PTM">
    <text evidence="1">Methylated by PrmB.</text>
</comment>
<comment type="similarity">
    <text evidence="1">Belongs to the universal ribosomal protein uL3 family.</text>
</comment>
<comment type="sequence caution" evidence="3">
    <conflict type="erroneous initiation">
        <sequence resource="EMBL-CDS" id="BAF88552"/>
    </conflict>
</comment>
<organism>
    <name type="scientific">Azorhizobium caulinodans (strain ATCC 43989 / DSM 5975 / JCM 20966 / LMG 6465 / NBRC 14845 / NCIMB 13405 / ORS 571)</name>
    <dbReference type="NCBI Taxonomy" id="438753"/>
    <lineage>
        <taxon>Bacteria</taxon>
        <taxon>Pseudomonadati</taxon>
        <taxon>Pseudomonadota</taxon>
        <taxon>Alphaproteobacteria</taxon>
        <taxon>Hyphomicrobiales</taxon>
        <taxon>Xanthobacteraceae</taxon>
        <taxon>Azorhizobium</taxon>
    </lineage>
</organism>
<feature type="chain" id="PRO_0000353592" description="Large ribosomal subunit protein uL3">
    <location>
        <begin position="1"/>
        <end position="241"/>
    </location>
</feature>
<feature type="region of interest" description="Disordered" evidence="2">
    <location>
        <begin position="140"/>
        <end position="168"/>
    </location>
</feature>
<feature type="modified residue" description="N5-methylglutamine" evidence="1">
    <location>
        <position position="151"/>
    </location>
</feature>
<sequence length="241" mass="25571">MRSGVIAQKLGMTRIFTDAGEHLPVTVLKVESCQVVAHRTLDKNGYVAVQLGAGKRKPKNTNKAERGQFARAEVEPKRKLAEFRVDADALIPVGAEITADHFVVGQYVDVTGTTIGKGFAGGMKRHNFGGLRASHGVSISHRSIGSTGGRQDPGKTFKNKKMPGHMGDVTVTTQNLKVVMTDVERGLIAVEGAVPGHAGGWIMVRDAVKKRLPSEAPKPGAFKLRETAGAVAAEATNEEGA</sequence>
<dbReference type="EMBL" id="AP009384">
    <property type="protein sequence ID" value="BAF88552.1"/>
    <property type="status" value="ALT_INIT"/>
    <property type="molecule type" value="Genomic_DNA"/>
</dbReference>
<dbReference type="RefSeq" id="WP_043879328.1">
    <property type="nucleotide sequence ID" value="NC_009937.1"/>
</dbReference>
<dbReference type="SMR" id="A8IAS6"/>
<dbReference type="STRING" id="438753.AZC_2554"/>
<dbReference type="KEGG" id="azc:AZC_2554"/>
<dbReference type="eggNOG" id="COG0087">
    <property type="taxonomic scope" value="Bacteria"/>
</dbReference>
<dbReference type="HOGENOM" id="CLU_044142_2_0_5"/>
<dbReference type="Proteomes" id="UP000000270">
    <property type="component" value="Chromosome"/>
</dbReference>
<dbReference type="GO" id="GO:0022625">
    <property type="term" value="C:cytosolic large ribosomal subunit"/>
    <property type="evidence" value="ECO:0007669"/>
    <property type="project" value="TreeGrafter"/>
</dbReference>
<dbReference type="GO" id="GO:0019843">
    <property type="term" value="F:rRNA binding"/>
    <property type="evidence" value="ECO:0007669"/>
    <property type="project" value="UniProtKB-UniRule"/>
</dbReference>
<dbReference type="GO" id="GO:0003735">
    <property type="term" value="F:structural constituent of ribosome"/>
    <property type="evidence" value="ECO:0007669"/>
    <property type="project" value="InterPro"/>
</dbReference>
<dbReference type="GO" id="GO:0006412">
    <property type="term" value="P:translation"/>
    <property type="evidence" value="ECO:0007669"/>
    <property type="project" value="UniProtKB-UniRule"/>
</dbReference>
<dbReference type="FunFam" id="2.40.30.10:FF:000004">
    <property type="entry name" value="50S ribosomal protein L3"/>
    <property type="match status" value="1"/>
</dbReference>
<dbReference type="FunFam" id="3.30.160.810:FF:000001">
    <property type="entry name" value="50S ribosomal protein L3"/>
    <property type="match status" value="1"/>
</dbReference>
<dbReference type="Gene3D" id="3.30.160.810">
    <property type="match status" value="1"/>
</dbReference>
<dbReference type="Gene3D" id="2.40.30.10">
    <property type="entry name" value="Translation factors"/>
    <property type="match status" value="1"/>
</dbReference>
<dbReference type="HAMAP" id="MF_01325_B">
    <property type="entry name" value="Ribosomal_uL3_B"/>
    <property type="match status" value="1"/>
</dbReference>
<dbReference type="InterPro" id="IPR000597">
    <property type="entry name" value="Ribosomal_uL3"/>
</dbReference>
<dbReference type="InterPro" id="IPR019927">
    <property type="entry name" value="Ribosomal_uL3_bac/org-type"/>
</dbReference>
<dbReference type="InterPro" id="IPR019926">
    <property type="entry name" value="Ribosomal_uL3_CS"/>
</dbReference>
<dbReference type="InterPro" id="IPR009000">
    <property type="entry name" value="Transl_B-barrel_sf"/>
</dbReference>
<dbReference type="NCBIfam" id="TIGR03625">
    <property type="entry name" value="L3_bact"/>
    <property type="match status" value="1"/>
</dbReference>
<dbReference type="PANTHER" id="PTHR11229">
    <property type="entry name" value="50S RIBOSOMAL PROTEIN L3"/>
    <property type="match status" value="1"/>
</dbReference>
<dbReference type="PANTHER" id="PTHR11229:SF16">
    <property type="entry name" value="LARGE RIBOSOMAL SUBUNIT PROTEIN UL3C"/>
    <property type="match status" value="1"/>
</dbReference>
<dbReference type="Pfam" id="PF00297">
    <property type="entry name" value="Ribosomal_L3"/>
    <property type="match status" value="1"/>
</dbReference>
<dbReference type="SUPFAM" id="SSF50447">
    <property type="entry name" value="Translation proteins"/>
    <property type="match status" value="1"/>
</dbReference>
<dbReference type="PROSITE" id="PS00474">
    <property type="entry name" value="RIBOSOMAL_L3"/>
    <property type="match status" value="1"/>
</dbReference>
<gene>
    <name evidence="1" type="primary">rplC</name>
    <name type="ordered locus">AZC_2554</name>
</gene>
<keyword id="KW-0488">Methylation</keyword>
<keyword id="KW-1185">Reference proteome</keyword>
<keyword id="KW-0687">Ribonucleoprotein</keyword>
<keyword id="KW-0689">Ribosomal protein</keyword>
<keyword id="KW-0694">RNA-binding</keyword>
<keyword id="KW-0699">rRNA-binding</keyword>
<evidence type="ECO:0000255" key="1">
    <source>
        <dbReference type="HAMAP-Rule" id="MF_01325"/>
    </source>
</evidence>
<evidence type="ECO:0000256" key="2">
    <source>
        <dbReference type="SAM" id="MobiDB-lite"/>
    </source>
</evidence>
<evidence type="ECO:0000305" key="3"/>
<accession>A8IAS6</accession>
<proteinExistence type="inferred from homology"/>
<reference key="1">
    <citation type="submission" date="2007-04" db="EMBL/GenBank/DDBJ databases">
        <title>Complete genome sequence of the nitrogen-fixing bacterium Azorhizobium caulinodans ORS571.</title>
        <authorList>
            <person name="Lee K.B."/>
            <person name="Backer P.D."/>
            <person name="Aono T."/>
            <person name="Liu C.T."/>
            <person name="Suzuki S."/>
            <person name="Suzuki T."/>
            <person name="Kaneko T."/>
            <person name="Yamada M."/>
            <person name="Tabata S."/>
            <person name="Kupfer D.M."/>
            <person name="Najar F.Z."/>
            <person name="Wiley G.B."/>
            <person name="Roe B."/>
            <person name="Binnewies T."/>
            <person name="Ussery D."/>
            <person name="Vereecke D."/>
            <person name="Gevers D."/>
            <person name="Holsters M."/>
            <person name="Oyaizu H."/>
        </authorList>
    </citation>
    <scope>NUCLEOTIDE SEQUENCE [LARGE SCALE GENOMIC DNA]</scope>
    <source>
        <strain>ATCC 43989 / DSM 5975 / JCM 20966 / LMG 6465 / NBRC 14845 / NCIMB 13405 / ORS 571</strain>
    </source>
</reference>
<name>RL3_AZOC5</name>
<protein>
    <recommendedName>
        <fullName evidence="1">Large ribosomal subunit protein uL3</fullName>
    </recommendedName>
    <alternativeName>
        <fullName evidence="3">50S ribosomal protein L3</fullName>
    </alternativeName>
</protein>